<comment type="function">
    <text evidence="1">Lyase that catalyzes the C1-decarboxylation of 4-hydroxy-3-methoxy-5-(all-trans-polyprenyl)benzoic acid into 2-methoxy-6-(all-trans-polyprenyl)phenol during ubiquinone biosynthesis.</text>
</comment>
<comment type="catalytic activity">
    <reaction evidence="1">
        <text>a 4-hydroxy-3-methoxy-5-(all-trans-polyprenyl)benzoate + H(+) = a 2-methoxy-6-(all-trans-polyprenyl)phenol + CO2</text>
        <dbReference type="Rhea" id="RHEA:81179"/>
        <dbReference type="Rhea" id="RHEA-COMP:9551"/>
        <dbReference type="Rhea" id="RHEA-COMP:10931"/>
        <dbReference type="ChEBI" id="CHEBI:15378"/>
        <dbReference type="ChEBI" id="CHEBI:16526"/>
        <dbReference type="ChEBI" id="CHEBI:62731"/>
        <dbReference type="ChEBI" id="CHEBI:84443"/>
        <dbReference type="EC" id="4.1.1.130"/>
    </reaction>
</comment>
<comment type="cofactor">
    <cofactor evidence="1">
        <name>Zn(2+)</name>
        <dbReference type="ChEBI" id="CHEBI:29105"/>
    </cofactor>
</comment>
<comment type="pathway">
    <text evidence="1">Cofactor biosynthesis; ubiquinone biosynthesis.</text>
</comment>
<comment type="subunit">
    <text evidence="1">Component of a multi-subunit COQ enzyme complex, composed of at least COQ3, COQ4, COQ5, COQ6, COQ7 and COQ9.</text>
</comment>
<comment type="subcellular location">
    <subcellularLocation>
        <location evidence="1">Mitochondrion inner membrane</location>
        <topology evidence="1">Peripheral membrane protein</topology>
        <orientation evidence="1">Matrix side</orientation>
    </subcellularLocation>
</comment>
<comment type="similarity">
    <text evidence="1">Belongs to the COQ4 family.</text>
</comment>
<comment type="sequence caution" evidence="3">
    <conflict type="erroneous gene model prediction">
        <sequence resource="EMBL-CDS" id="EAT91799"/>
    </conflict>
</comment>
<feature type="transit peptide" description="Mitochondrion" evidence="1">
    <location>
        <begin position="1"/>
        <end position="32"/>
    </location>
</feature>
<feature type="chain" id="PRO_0000388128" description="Ubiquinone biosynthesis protein COQ4, mitochondrial">
    <location>
        <begin position="33"/>
        <end position="290"/>
    </location>
</feature>
<feature type="region of interest" description="Disordered" evidence="2">
    <location>
        <begin position="260"/>
        <end position="290"/>
    </location>
</feature>
<feature type="binding site" evidence="1">
    <location>
        <position position="168"/>
    </location>
    <ligand>
        <name>Zn(2+)</name>
        <dbReference type="ChEBI" id="CHEBI:29105"/>
    </ligand>
</feature>
<feature type="binding site" evidence="1">
    <location>
        <position position="169"/>
    </location>
    <ligand>
        <name>Zn(2+)</name>
        <dbReference type="ChEBI" id="CHEBI:29105"/>
    </ligand>
</feature>
<feature type="binding site" evidence="1">
    <location>
        <position position="172"/>
    </location>
    <ligand>
        <name>Zn(2+)</name>
        <dbReference type="ChEBI" id="CHEBI:29105"/>
    </ligand>
</feature>
<feature type="binding site" evidence="1">
    <location>
        <position position="184"/>
    </location>
    <ligand>
        <name>Zn(2+)</name>
        <dbReference type="ChEBI" id="CHEBI:29105"/>
    </ligand>
</feature>
<dbReference type="EC" id="4.1.1.130" evidence="1"/>
<dbReference type="EMBL" id="CH445325">
    <property type="protein sequence ID" value="EAT91799.2"/>
    <property type="status" value="ALT_SEQ"/>
    <property type="molecule type" value="Genomic_DNA"/>
</dbReference>
<dbReference type="RefSeq" id="XP_001790994.1">
    <property type="nucleotide sequence ID" value="XM_001790942.1"/>
</dbReference>
<dbReference type="SMR" id="Q0V6R0"/>
<dbReference type="FunCoup" id="Q0V6R0">
    <property type="interactions" value="493"/>
</dbReference>
<dbReference type="STRING" id="321614.Q0V6R0"/>
<dbReference type="GeneID" id="5968059"/>
<dbReference type="KEGG" id="pno:SNOG_00304"/>
<dbReference type="VEuPathDB" id="FungiDB:JI435_003040"/>
<dbReference type="eggNOG" id="KOG3244">
    <property type="taxonomic scope" value="Eukaryota"/>
</dbReference>
<dbReference type="InParanoid" id="Q0V6R0"/>
<dbReference type="OrthoDB" id="4249at2759"/>
<dbReference type="UniPathway" id="UPA00232"/>
<dbReference type="Proteomes" id="UP000001055">
    <property type="component" value="Unassembled WGS sequence"/>
</dbReference>
<dbReference type="GO" id="GO:0031314">
    <property type="term" value="C:extrinsic component of mitochondrial inner membrane"/>
    <property type="evidence" value="ECO:0007669"/>
    <property type="project" value="UniProtKB-UniRule"/>
</dbReference>
<dbReference type="GO" id="GO:0005739">
    <property type="term" value="C:mitochondrion"/>
    <property type="evidence" value="ECO:0000318"/>
    <property type="project" value="GO_Central"/>
</dbReference>
<dbReference type="GO" id="GO:0006744">
    <property type="term" value="P:ubiquinone biosynthetic process"/>
    <property type="evidence" value="ECO:0007669"/>
    <property type="project" value="UniProtKB-UniRule"/>
</dbReference>
<dbReference type="HAMAP" id="MF_03111">
    <property type="entry name" value="Coq4"/>
    <property type="match status" value="1"/>
</dbReference>
<dbReference type="InterPro" id="IPR007715">
    <property type="entry name" value="Coq4"/>
</dbReference>
<dbReference type="InterPro" id="IPR027540">
    <property type="entry name" value="Coq4_euk"/>
</dbReference>
<dbReference type="PANTHER" id="PTHR12922">
    <property type="entry name" value="UBIQUINONE BIOSYNTHESIS PROTEIN"/>
    <property type="match status" value="1"/>
</dbReference>
<dbReference type="PANTHER" id="PTHR12922:SF7">
    <property type="entry name" value="UBIQUINONE BIOSYNTHESIS PROTEIN COQ4 HOMOLOG, MITOCHONDRIAL"/>
    <property type="match status" value="1"/>
</dbReference>
<dbReference type="Pfam" id="PF05019">
    <property type="entry name" value="Coq4"/>
    <property type="match status" value="1"/>
</dbReference>
<gene>
    <name evidence="1" type="primary">COQ4</name>
    <name type="ORF">SNOG_00304</name>
</gene>
<sequence>MAKRVCVGDLRKLAGSVSTPSRCILPPHARCFSVLNRPPPNYEGHIPLTVIERLGLAVGSGLGSFLDPRRADLIASFGEATAQPHFIYKLRDRMLLNPTGRRILRDRPRLTSTSLDIPRLRQLPPNTLGYVYALWLDREGVSPDTRATVQYIDDEECAYVMQRYRECHDFYHALVGLPVFREGEVALKAFEFANTGLPMTGLAVFSAFTLKKAEWRRFWDIYGPWATRNGAQSDDVINIYWEEELETDIDQLRTRLGIEKPPDLREMRKAEREAQKKDKEAKETMTRAAV</sequence>
<evidence type="ECO:0000255" key="1">
    <source>
        <dbReference type="HAMAP-Rule" id="MF_03111"/>
    </source>
</evidence>
<evidence type="ECO:0000256" key="2">
    <source>
        <dbReference type="SAM" id="MobiDB-lite"/>
    </source>
</evidence>
<evidence type="ECO:0000305" key="3"/>
<name>COQ4_PHANO</name>
<reference key="1">
    <citation type="journal article" date="2007" name="Plant Cell">
        <title>Dothideomycete-plant interactions illuminated by genome sequencing and EST analysis of the wheat pathogen Stagonospora nodorum.</title>
        <authorList>
            <person name="Hane J.K."/>
            <person name="Lowe R.G.T."/>
            <person name="Solomon P.S."/>
            <person name="Tan K.-C."/>
            <person name="Schoch C.L."/>
            <person name="Spatafora J.W."/>
            <person name="Crous P.W."/>
            <person name="Kodira C.D."/>
            <person name="Birren B.W."/>
            <person name="Galagan J.E."/>
            <person name="Torriani S.F.F."/>
            <person name="McDonald B.A."/>
            <person name="Oliver R.P."/>
        </authorList>
    </citation>
    <scope>NUCLEOTIDE SEQUENCE [LARGE SCALE GENOMIC DNA]</scope>
    <source>
        <strain>SN15 / ATCC MYA-4574 / FGSC 10173</strain>
    </source>
</reference>
<proteinExistence type="inferred from homology"/>
<accession>Q0V6R0</accession>
<organism>
    <name type="scientific">Phaeosphaeria nodorum (strain SN15 / ATCC MYA-4574 / FGSC 10173)</name>
    <name type="common">Glume blotch fungus</name>
    <name type="synonym">Parastagonospora nodorum</name>
    <dbReference type="NCBI Taxonomy" id="321614"/>
    <lineage>
        <taxon>Eukaryota</taxon>
        <taxon>Fungi</taxon>
        <taxon>Dikarya</taxon>
        <taxon>Ascomycota</taxon>
        <taxon>Pezizomycotina</taxon>
        <taxon>Dothideomycetes</taxon>
        <taxon>Pleosporomycetidae</taxon>
        <taxon>Pleosporales</taxon>
        <taxon>Pleosporineae</taxon>
        <taxon>Phaeosphaeriaceae</taxon>
        <taxon>Parastagonospora</taxon>
    </lineage>
</organism>
<keyword id="KW-0456">Lyase</keyword>
<keyword id="KW-0472">Membrane</keyword>
<keyword id="KW-0479">Metal-binding</keyword>
<keyword id="KW-0496">Mitochondrion</keyword>
<keyword id="KW-0999">Mitochondrion inner membrane</keyword>
<keyword id="KW-0809">Transit peptide</keyword>
<keyword id="KW-0831">Ubiquinone biosynthesis</keyword>
<keyword id="KW-0862">Zinc</keyword>
<protein>
    <recommendedName>
        <fullName evidence="1">Ubiquinone biosynthesis protein COQ4, mitochondrial</fullName>
    </recommendedName>
    <alternativeName>
        <fullName>4-hydroxy-3-methoxy-5-polyprenylbenzoate decarboxylase</fullName>
        <ecNumber evidence="1">4.1.1.130</ecNumber>
    </alternativeName>
    <alternativeName>
        <fullName evidence="1">Coenzyme Q biosynthesis protein 4</fullName>
    </alternativeName>
</protein>